<name>AROC_CHLAD</name>
<keyword id="KW-0028">Amino-acid biosynthesis</keyword>
<keyword id="KW-0057">Aromatic amino acid biosynthesis</keyword>
<keyword id="KW-0274">FAD</keyword>
<keyword id="KW-0285">Flavoprotein</keyword>
<keyword id="KW-0288">FMN</keyword>
<keyword id="KW-0456">Lyase</keyword>
<keyword id="KW-0521">NADP</keyword>
<dbReference type="EC" id="4.2.3.5" evidence="1"/>
<dbReference type="EMBL" id="CP001337">
    <property type="protein sequence ID" value="ACL26637.1"/>
    <property type="molecule type" value="Genomic_DNA"/>
</dbReference>
<dbReference type="RefSeq" id="WP_015942482.1">
    <property type="nucleotide sequence ID" value="NC_011831.1"/>
</dbReference>
<dbReference type="SMR" id="B8GB37"/>
<dbReference type="STRING" id="326427.Cagg_3801"/>
<dbReference type="KEGG" id="cag:Cagg_3801"/>
<dbReference type="eggNOG" id="COG0082">
    <property type="taxonomic scope" value="Bacteria"/>
</dbReference>
<dbReference type="HOGENOM" id="CLU_034547_0_0_0"/>
<dbReference type="OrthoDB" id="9771806at2"/>
<dbReference type="UniPathway" id="UPA00053">
    <property type="reaction ID" value="UER00090"/>
</dbReference>
<dbReference type="Proteomes" id="UP000002508">
    <property type="component" value="Chromosome"/>
</dbReference>
<dbReference type="GO" id="GO:0005829">
    <property type="term" value="C:cytosol"/>
    <property type="evidence" value="ECO:0007669"/>
    <property type="project" value="TreeGrafter"/>
</dbReference>
<dbReference type="GO" id="GO:0004107">
    <property type="term" value="F:chorismate synthase activity"/>
    <property type="evidence" value="ECO:0007669"/>
    <property type="project" value="UniProtKB-UniRule"/>
</dbReference>
<dbReference type="GO" id="GO:0010181">
    <property type="term" value="F:FMN binding"/>
    <property type="evidence" value="ECO:0007669"/>
    <property type="project" value="TreeGrafter"/>
</dbReference>
<dbReference type="GO" id="GO:0008652">
    <property type="term" value="P:amino acid biosynthetic process"/>
    <property type="evidence" value="ECO:0007669"/>
    <property type="project" value="UniProtKB-KW"/>
</dbReference>
<dbReference type="GO" id="GO:0009073">
    <property type="term" value="P:aromatic amino acid family biosynthetic process"/>
    <property type="evidence" value="ECO:0007669"/>
    <property type="project" value="UniProtKB-KW"/>
</dbReference>
<dbReference type="GO" id="GO:0009423">
    <property type="term" value="P:chorismate biosynthetic process"/>
    <property type="evidence" value="ECO:0007669"/>
    <property type="project" value="UniProtKB-UniRule"/>
</dbReference>
<dbReference type="CDD" id="cd07304">
    <property type="entry name" value="Chorismate_synthase"/>
    <property type="match status" value="1"/>
</dbReference>
<dbReference type="FunFam" id="3.60.150.10:FF:000003">
    <property type="entry name" value="Chorismate synthase"/>
    <property type="match status" value="1"/>
</dbReference>
<dbReference type="Gene3D" id="3.60.150.10">
    <property type="entry name" value="Chorismate synthase AroC"/>
    <property type="match status" value="1"/>
</dbReference>
<dbReference type="HAMAP" id="MF_00300">
    <property type="entry name" value="Chorismate_synth"/>
    <property type="match status" value="1"/>
</dbReference>
<dbReference type="InterPro" id="IPR000453">
    <property type="entry name" value="Chorismate_synth"/>
</dbReference>
<dbReference type="InterPro" id="IPR035904">
    <property type="entry name" value="Chorismate_synth_AroC_sf"/>
</dbReference>
<dbReference type="InterPro" id="IPR020541">
    <property type="entry name" value="Chorismate_synthase_CS"/>
</dbReference>
<dbReference type="NCBIfam" id="TIGR00033">
    <property type="entry name" value="aroC"/>
    <property type="match status" value="1"/>
</dbReference>
<dbReference type="NCBIfam" id="NF003793">
    <property type="entry name" value="PRK05382.1"/>
    <property type="match status" value="1"/>
</dbReference>
<dbReference type="PANTHER" id="PTHR21085">
    <property type="entry name" value="CHORISMATE SYNTHASE"/>
    <property type="match status" value="1"/>
</dbReference>
<dbReference type="PANTHER" id="PTHR21085:SF0">
    <property type="entry name" value="CHORISMATE SYNTHASE"/>
    <property type="match status" value="1"/>
</dbReference>
<dbReference type="Pfam" id="PF01264">
    <property type="entry name" value="Chorismate_synt"/>
    <property type="match status" value="1"/>
</dbReference>
<dbReference type="PIRSF" id="PIRSF001456">
    <property type="entry name" value="Chorismate_synth"/>
    <property type="match status" value="1"/>
</dbReference>
<dbReference type="SUPFAM" id="SSF103263">
    <property type="entry name" value="Chorismate synthase, AroC"/>
    <property type="match status" value="1"/>
</dbReference>
<dbReference type="PROSITE" id="PS00787">
    <property type="entry name" value="CHORISMATE_SYNTHASE_1"/>
    <property type="match status" value="1"/>
</dbReference>
<dbReference type="PROSITE" id="PS00788">
    <property type="entry name" value="CHORISMATE_SYNTHASE_2"/>
    <property type="match status" value="1"/>
</dbReference>
<feature type="chain" id="PRO_1000132762" description="Chorismate synthase">
    <location>
        <begin position="1"/>
        <end position="364"/>
    </location>
</feature>
<feature type="binding site" evidence="1">
    <location>
        <position position="48"/>
    </location>
    <ligand>
        <name>NADP(+)</name>
        <dbReference type="ChEBI" id="CHEBI:58349"/>
    </ligand>
</feature>
<feature type="binding site" evidence="1">
    <location>
        <position position="54"/>
    </location>
    <ligand>
        <name>NADP(+)</name>
        <dbReference type="ChEBI" id="CHEBI:58349"/>
    </ligand>
</feature>
<feature type="binding site" evidence="1">
    <location>
        <begin position="125"/>
        <end position="127"/>
    </location>
    <ligand>
        <name>FMN</name>
        <dbReference type="ChEBI" id="CHEBI:58210"/>
    </ligand>
</feature>
<feature type="binding site" evidence="1">
    <location>
        <position position="282"/>
    </location>
    <ligand>
        <name>FMN</name>
        <dbReference type="ChEBI" id="CHEBI:58210"/>
    </ligand>
</feature>
<feature type="binding site" evidence="1">
    <location>
        <begin position="297"/>
        <end position="301"/>
    </location>
    <ligand>
        <name>FMN</name>
        <dbReference type="ChEBI" id="CHEBI:58210"/>
    </ligand>
</feature>
<feature type="binding site" evidence="1">
    <location>
        <position position="323"/>
    </location>
    <ligand>
        <name>FMN</name>
        <dbReference type="ChEBI" id="CHEBI:58210"/>
    </ligand>
</feature>
<organism>
    <name type="scientific">Chloroflexus aggregans (strain MD-66 / DSM 9485)</name>
    <dbReference type="NCBI Taxonomy" id="326427"/>
    <lineage>
        <taxon>Bacteria</taxon>
        <taxon>Bacillati</taxon>
        <taxon>Chloroflexota</taxon>
        <taxon>Chloroflexia</taxon>
        <taxon>Chloroflexales</taxon>
        <taxon>Chloroflexineae</taxon>
        <taxon>Chloroflexaceae</taxon>
        <taxon>Chloroflexus</taxon>
    </lineage>
</organism>
<reference key="1">
    <citation type="submission" date="2008-12" db="EMBL/GenBank/DDBJ databases">
        <title>Complete sequence of Chloroflexus aggregans DSM 9485.</title>
        <authorList>
            <consortium name="US DOE Joint Genome Institute"/>
            <person name="Lucas S."/>
            <person name="Copeland A."/>
            <person name="Lapidus A."/>
            <person name="Glavina del Rio T."/>
            <person name="Dalin E."/>
            <person name="Tice H."/>
            <person name="Pitluck S."/>
            <person name="Foster B."/>
            <person name="Larimer F."/>
            <person name="Land M."/>
            <person name="Hauser L."/>
            <person name="Kyrpides N."/>
            <person name="Mikhailova N."/>
            <person name="Bryant D.A."/>
            <person name="Richardson P."/>
        </authorList>
    </citation>
    <scope>NUCLEOTIDE SEQUENCE [LARGE SCALE GENOMIC DNA]</scope>
    <source>
        <strain>MD-66 / DSM 9485</strain>
    </source>
</reference>
<proteinExistence type="inferred from homology"/>
<protein>
    <recommendedName>
        <fullName evidence="1">Chorismate synthase</fullName>
        <shortName evidence="1">CS</shortName>
        <ecNumber evidence="1">4.2.3.5</ecNumber>
    </recommendedName>
    <alternativeName>
        <fullName evidence="1">5-enolpyruvylshikimate-3-phosphate phospholyase</fullName>
    </alternativeName>
</protein>
<comment type="function">
    <text evidence="1">Catalyzes the anti-1,4-elimination of the C-3 phosphate and the C-6 proR hydrogen from 5-enolpyruvylshikimate-3-phosphate (EPSP) to yield chorismate, which is the branch point compound that serves as the starting substrate for the three terminal pathways of aromatic amino acid biosynthesis. This reaction introduces a second double bond into the aromatic ring system.</text>
</comment>
<comment type="catalytic activity">
    <reaction evidence="1">
        <text>5-O-(1-carboxyvinyl)-3-phosphoshikimate = chorismate + phosphate</text>
        <dbReference type="Rhea" id="RHEA:21020"/>
        <dbReference type="ChEBI" id="CHEBI:29748"/>
        <dbReference type="ChEBI" id="CHEBI:43474"/>
        <dbReference type="ChEBI" id="CHEBI:57701"/>
        <dbReference type="EC" id="4.2.3.5"/>
    </reaction>
</comment>
<comment type="cofactor">
    <cofactor evidence="1">
        <name>FMNH2</name>
        <dbReference type="ChEBI" id="CHEBI:57618"/>
    </cofactor>
    <text evidence="1">Reduced FMN (FMNH(2)).</text>
</comment>
<comment type="pathway">
    <text evidence="1">Metabolic intermediate biosynthesis; chorismate biosynthesis; chorismate from D-erythrose 4-phosphate and phosphoenolpyruvate: step 7/7.</text>
</comment>
<comment type="subunit">
    <text evidence="1">Homotetramer.</text>
</comment>
<comment type="similarity">
    <text evidence="1">Belongs to the chorismate synthase family.</text>
</comment>
<gene>
    <name evidence="1" type="primary">aroC</name>
    <name type="ordered locus">Cagg_3801</name>
</gene>
<evidence type="ECO:0000255" key="1">
    <source>
        <dbReference type="HAMAP-Rule" id="MF_00300"/>
    </source>
</evidence>
<accession>B8GB37</accession>
<sequence length="364" mass="39476">MPGNSFGHVFRLTTWGESHGPAVGCTVDGCPAGLPLDVADIQRELDRRRVGQSRVSSQRREADEVQILSGVFEGRTTGTPITMVVYNTDAKSHHYDTIKDAYRPGHADYTWDVKYGFRDWRGGGRSSARETIGRVAGGAIARKLLATVGVTIVGYTLQLADLRAEVFDEAEIERNIMRCPDARVAALMVERVDQARRELDSLGGIVEVRARGVPPGLGEPVFDKLQADIGKAMFSIPAIKGVEIGEGFGVAMLRGSQNNDPFIRREDGSIGTTSNHHGGILGGISTGEEIVVRLAAKPPASIARPQQTVDRDGNPVTIEVHGRHDPTVLPRLVPVAEAMLALVLADHLLRQRLARVSWSERDDG</sequence>